<evidence type="ECO:0000250" key="1"/>
<evidence type="ECO:0000250" key="2">
    <source>
        <dbReference type="UniProtKB" id="O42807"/>
    </source>
</evidence>
<evidence type="ECO:0000255" key="3"/>
<evidence type="ECO:0000305" key="4"/>
<dbReference type="EC" id="3.1.1.73"/>
<dbReference type="EMBL" id="BA000050">
    <property type="protein sequence ID" value="BAE56750.1"/>
    <property type="molecule type" value="Genomic_DNA"/>
</dbReference>
<dbReference type="RefSeq" id="XP_001818752.1">
    <property type="nucleotide sequence ID" value="XM_001818700.1"/>
</dbReference>
<dbReference type="SMR" id="Q2UNW5"/>
<dbReference type="STRING" id="510516.Q2UNW5"/>
<dbReference type="ESTHER" id="aspor-q2unw5">
    <property type="family name" value="Lipase_3"/>
</dbReference>
<dbReference type="GlyCosmos" id="Q2UNW5">
    <property type="glycosylation" value="2 sites, No reported glycans"/>
</dbReference>
<dbReference type="EnsemblFungi" id="BAE56750">
    <property type="protein sequence ID" value="BAE56750"/>
    <property type="gene ID" value="AO090001000207"/>
</dbReference>
<dbReference type="GeneID" id="5990723"/>
<dbReference type="KEGG" id="aor:AO090001000207"/>
<dbReference type="VEuPathDB" id="FungiDB:AO090001000207"/>
<dbReference type="HOGENOM" id="CLU_032957_1_1_1"/>
<dbReference type="OMA" id="ETDINGW"/>
<dbReference type="OrthoDB" id="2909at5052"/>
<dbReference type="BRENDA" id="3.1.1.73">
    <property type="organism ID" value="522"/>
</dbReference>
<dbReference type="Proteomes" id="UP000006564">
    <property type="component" value="Chromosome 2"/>
</dbReference>
<dbReference type="GO" id="GO:0005576">
    <property type="term" value="C:extracellular region"/>
    <property type="evidence" value="ECO:0007669"/>
    <property type="project" value="UniProtKB-SubCell"/>
</dbReference>
<dbReference type="GO" id="GO:0030600">
    <property type="term" value="F:feruloyl esterase activity"/>
    <property type="evidence" value="ECO:0007669"/>
    <property type="project" value="UniProtKB-EC"/>
</dbReference>
<dbReference type="GO" id="GO:0006629">
    <property type="term" value="P:lipid metabolic process"/>
    <property type="evidence" value="ECO:0007669"/>
    <property type="project" value="InterPro"/>
</dbReference>
<dbReference type="GO" id="GO:0045493">
    <property type="term" value="P:xylan catabolic process"/>
    <property type="evidence" value="ECO:0007669"/>
    <property type="project" value="UniProtKB-KW"/>
</dbReference>
<dbReference type="CDD" id="cd00519">
    <property type="entry name" value="Lipase_3"/>
    <property type="match status" value="1"/>
</dbReference>
<dbReference type="Gene3D" id="3.40.50.1820">
    <property type="entry name" value="alpha/beta hydrolase"/>
    <property type="match status" value="1"/>
</dbReference>
<dbReference type="InterPro" id="IPR029058">
    <property type="entry name" value="AB_hydrolase_fold"/>
</dbReference>
<dbReference type="InterPro" id="IPR051299">
    <property type="entry name" value="AB_hydrolase_lip/est"/>
</dbReference>
<dbReference type="InterPro" id="IPR002921">
    <property type="entry name" value="Fungal_lipase-type"/>
</dbReference>
<dbReference type="PANTHER" id="PTHR46640:SF1">
    <property type="entry name" value="FUNGAL LIPASE-LIKE DOMAIN-CONTAINING PROTEIN-RELATED"/>
    <property type="match status" value="1"/>
</dbReference>
<dbReference type="PANTHER" id="PTHR46640">
    <property type="entry name" value="TRIACYLGLYCEROL LIPASE, PUTATIVE (AFU_ORTHOLOGUE AFUA_6G06510)-RELATED"/>
    <property type="match status" value="1"/>
</dbReference>
<dbReference type="Pfam" id="PF01764">
    <property type="entry name" value="Lipase_3"/>
    <property type="match status" value="1"/>
</dbReference>
<dbReference type="SUPFAM" id="SSF53474">
    <property type="entry name" value="alpha/beta-Hydrolases"/>
    <property type="match status" value="1"/>
</dbReference>
<dbReference type="PROSITE" id="PS00120">
    <property type="entry name" value="LIPASE_SER"/>
    <property type="match status" value="1"/>
</dbReference>
<organism>
    <name type="scientific">Aspergillus oryzae (strain ATCC 42149 / RIB 40)</name>
    <name type="common">Yellow koji mold</name>
    <dbReference type="NCBI Taxonomy" id="510516"/>
    <lineage>
        <taxon>Eukaryota</taxon>
        <taxon>Fungi</taxon>
        <taxon>Dikarya</taxon>
        <taxon>Ascomycota</taxon>
        <taxon>Pezizomycotina</taxon>
        <taxon>Eurotiomycetes</taxon>
        <taxon>Eurotiomycetidae</taxon>
        <taxon>Eurotiales</taxon>
        <taxon>Aspergillaceae</taxon>
        <taxon>Aspergillus</taxon>
        <taxon>Aspergillus subgen. Circumdati</taxon>
    </lineage>
</organism>
<accession>Q2UNW5</accession>
<keyword id="KW-0119">Carbohydrate metabolism</keyword>
<keyword id="KW-1015">Disulfide bond</keyword>
<keyword id="KW-0325">Glycoprotein</keyword>
<keyword id="KW-0378">Hydrolase</keyword>
<keyword id="KW-0624">Polysaccharide degradation</keyword>
<keyword id="KW-1185">Reference proteome</keyword>
<keyword id="KW-0964">Secreted</keyword>
<keyword id="KW-0719">Serine esterase</keyword>
<keyword id="KW-0732">Signal</keyword>
<keyword id="KW-0858">Xylan degradation</keyword>
<gene>
    <name type="primary">faeA</name>
    <name type="ORF">AO090001000207</name>
</gene>
<name>FAEA_ASPOR</name>
<sequence length="281" mass="30246">MKNFFSMHAILLACSAGAGLAAITQGISEGTYSRIVEMATISQAAYANLCNIPPAITSAGKIYNAETDINGWVLRDDSRQEIITVFRGTGSDTNLQLDTNYTQAPFDTLPQCSGCAVHGGYYVGWVSVKDQVEGLIHQQASQYPDYSLVVTGHSLGASMAAITAAQLSATYNNITVYTFGEPRTGNQAYASYVDETFQATNPDATKFYRVTHTNDGIPNLPPTSQGYVHHGTEYWSVEPHGPQNMYLCLGDEVQCCEAQGGQGVNDAHVTYFGMASGACTW</sequence>
<reference key="1">
    <citation type="journal article" date="2005" name="Nature">
        <title>Genome sequencing and analysis of Aspergillus oryzae.</title>
        <authorList>
            <person name="Machida M."/>
            <person name="Asai K."/>
            <person name="Sano M."/>
            <person name="Tanaka T."/>
            <person name="Kumagai T."/>
            <person name="Terai G."/>
            <person name="Kusumoto K."/>
            <person name="Arima T."/>
            <person name="Akita O."/>
            <person name="Kashiwagi Y."/>
            <person name="Abe K."/>
            <person name="Gomi K."/>
            <person name="Horiuchi H."/>
            <person name="Kitamoto K."/>
            <person name="Kobayashi T."/>
            <person name="Takeuchi M."/>
            <person name="Denning D.W."/>
            <person name="Galagan J.E."/>
            <person name="Nierman W.C."/>
            <person name="Yu J."/>
            <person name="Archer D.B."/>
            <person name="Bennett J.W."/>
            <person name="Bhatnagar D."/>
            <person name="Cleveland T.E."/>
            <person name="Fedorova N.D."/>
            <person name="Gotoh O."/>
            <person name="Horikawa H."/>
            <person name="Hosoyama A."/>
            <person name="Ichinomiya M."/>
            <person name="Igarashi R."/>
            <person name="Iwashita K."/>
            <person name="Juvvadi P.R."/>
            <person name="Kato M."/>
            <person name="Kato Y."/>
            <person name="Kin T."/>
            <person name="Kokubun A."/>
            <person name="Maeda H."/>
            <person name="Maeyama N."/>
            <person name="Maruyama J."/>
            <person name="Nagasaki H."/>
            <person name="Nakajima T."/>
            <person name="Oda K."/>
            <person name="Okada K."/>
            <person name="Paulsen I."/>
            <person name="Sakamoto K."/>
            <person name="Sawano T."/>
            <person name="Takahashi M."/>
            <person name="Takase K."/>
            <person name="Terabayashi Y."/>
            <person name="Wortman J.R."/>
            <person name="Yamada O."/>
            <person name="Yamagata Y."/>
            <person name="Anazawa H."/>
            <person name="Hata Y."/>
            <person name="Koide Y."/>
            <person name="Komori T."/>
            <person name="Koyama Y."/>
            <person name="Minetoki T."/>
            <person name="Suharnan S."/>
            <person name="Tanaka A."/>
            <person name="Isono K."/>
            <person name="Kuhara S."/>
            <person name="Ogasawara N."/>
            <person name="Kikuchi H."/>
        </authorList>
    </citation>
    <scope>NUCLEOTIDE SEQUENCE [LARGE SCALE GENOMIC DNA]</scope>
    <source>
        <strain>ATCC 42149 / RIB 40</strain>
    </source>
</reference>
<protein>
    <recommendedName>
        <fullName>Probable feruloyl esterase A</fullName>
        <ecNumber>3.1.1.73</ecNumber>
    </recommendedName>
    <alternativeName>
        <fullName>Ferulic acid esterase A</fullName>
    </alternativeName>
</protein>
<comment type="function">
    <text evidence="1">Involved in degradation of plant cell walls. Hydrolyzes the feruloyl-arabinose ester bond in arabinoxylans, and the feruloyl-galactose ester bond in pectin (By similarity).</text>
</comment>
<comment type="catalytic activity">
    <reaction>
        <text>feruloyl-polysaccharide + H2O = ferulate + polysaccharide.</text>
        <dbReference type="EC" id="3.1.1.73"/>
    </reaction>
</comment>
<comment type="subcellular location">
    <subcellularLocation>
        <location evidence="1">Secreted</location>
    </subcellularLocation>
</comment>
<comment type="similarity">
    <text evidence="4">Belongs to the AB hydrolase superfamily. FaeA family.</text>
</comment>
<feature type="signal peptide" evidence="3">
    <location>
        <begin position="1"/>
        <end position="21"/>
    </location>
</feature>
<feature type="chain" id="PRO_0000393494" description="Probable feruloyl esterase A">
    <location>
        <begin position="22"/>
        <end position="281"/>
    </location>
</feature>
<feature type="active site" description="Nucleophile" evidence="2">
    <location>
        <position position="154"/>
    </location>
</feature>
<feature type="active site" description="Charge relay system" evidence="2">
    <location>
        <position position="215"/>
    </location>
</feature>
<feature type="active site" description="Charge relay system" evidence="2">
    <location>
        <position position="268"/>
    </location>
</feature>
<feature type="binding site" evidence="2">
    <location>
        <position position="98"/>
    </location>
    <ligand>
        <name>substrate</name>
    </ligand>
</feature>
<feature type="binding site" evidence="2">
    <location>
        <position position="101"/>
    </location>
    <ligand>
        <name>substrate</name>
    </ligand>
</feature>
<feature type="binding site" evidence="2">
    <location>
        <position position="268"/>
    </location>
    <ligand>
        <name>substrate</name>
    </ligand>
</feature>
<feature type="glycosylation site" description="N-linked (GlcNAc...) asparagine" evidence="3">
    <location>
        <position position="100"/>
    </location>
</feature>
<feature type="glycosylation site" description="N-linked (GlcNAc...) asparagine" evidence="3">
    <location>
        <position position="173"/>
    </location>
</feature>
<feature type="disulfide bond" evidence="2">
    <location>
        <begin position="50"/>
        <end position="279"/>
    </location>
</feature>
<feature type="disulfide bond" evidence="2">
    <location>
        <begin position="112"/>
        <end position="115"/>
    </location>
</feature>
<feature type="disulfide bond" evidence="2">
    <location>
        <begin position="248"/>
        <end position="255"/>
    </location>
</feature>
<proteinExistence type="inferred from homology"/>